<proteinExistence type="inferred from homology"/>
<sequence>MSLTLRVLAPDQSVFDGTAEEVILPSTTGLIGILPGHISLVTALDIGVMRVRANGAWNSIALMGGFAEVEADDVTVLVNGAELGKSIDATTAEAELEQAKAKVSQMEGQEPSTEKIKAQQNFNRARARVQATK</sequence>
<organism>
    <name type="scientific">Prochlorococcus marinus (strain MIT 9313)</name>
    <dbReference type="NCBI Taxonomy" id="74547"/>
    <lineage>
        <taxon>Bacteria</taxon>
        <taxon>Bacillati</taxon>
        <taxon>Cyanobacteriota</taxon>
        <taxon>Cyanophyceae</taxon>
        <taxon>Synechococcales</taxon>
        <taxon>Prochlorococcaceae</taxon>
        <taxon>Prochlorococcus</taxon>
    </lineage>
</organism>
<reference key="1">
    <citation type="journal article" date="2003" name="Nature">
        <title>Genome divergence in two Prochlorococcus ecotypes reflects oceanic niche differentiation.</title>
        <authorList>
            <person name="Rocap G."/>
            <person name="Larimer F.W."/>
            <person name="Lamerdin J.E."/>
            <person name="Malfatti S."/>
            <person name="Chain P."/>
            <person name="Ahlgren N.A."/>
            <person name="Arellano A."/>
            <person name="Coleman M."/>
            <person name="Hauser L."/>
            <person name="Hess W.R."/>
            <person name="Johnson Z.I."/>
            <person name="Land M.L."/>
            <person name="Lindell D."/>
            <person name="Post A.F."/>
            <person name="Regala W."/>
            <person name="Shah M."/>
            <person name="Shaw S.L."/>
            <person name="Steglich C."/>
            <person name="Sullivan M.B."/>
            <person name="Ting C.S."/>
            <person name="Tolonen A."/>
            <person name="Webb E.A."/>
            <person name="Zinser E.R."/>
            <person name="Chisholm S.W."/>
        </authorList>
    </citation>
    <scope>NUCLEOTIDE SEQUENCE [LARGE SCALE GENOMIC DNA]</scope>
    <source>
        <strain>MIT 9313</strain>
    </source>
</reference>
<protein>
    <recommendedName>
        <fullName evidence="1">ATP synthase epsilon chain</fullName>
    </recommendedName>
    <alternativeName>
        <fullName evidence="1">ATP synthase F1 sector epsilon subunit</fullName>
    </alternativeName>
    <alternativeName>
        <fullName evidence="1">F-ATPase epsilon subunit</fullName>
    </alternativeName>
</protein>
<accession>Q7TUS2</accession>
<keyword id="KW-0066">ATP synthesis</keyword>
<keyword id="KW-0139">CF(1)</keyword>
<keyword id="KW-0375">Hydrogen ion transport</keyword>
<keyword id="KW-0406">Ion transport</keyword>
<keyword id="KW-0472">Membrane</keyword>
<keyword id="KW-1185">Reference proteome</keyword>
<keyword id="KW-0793">Thylakoid</keyword>
<keyword id="KW-0813">Transport</keyword>
<gene>
    <name evidence="1" type="primary">atpC</name>
    <name type="ordered locus">PMT_1452</name>
</gene>
<feature type="chain" id="PRO_0000188177" description="ATP synthase epsilon chain">
    <location>
        <begin position="1"/>
        <end position="133"/>
    </location>
</feature>
<feature type="region of interest" description="Disordered" evidence="2">
    <location>
        <begin position="103"/>
        <end position="133"/>
    </location>
</feature>
<comment type="function">
    <text evidence="1">Produces ATP from ADP in the presence of a proton gradient across the membrane.</text>
</comment>
<comment type="subunit">
    <text>F-type ATPases have 2 components, CF(1) - the catalytic core - and CF(0) - the membrane proton channel. CF(1) has five subunits: alpha(3), beta(3), gamma(1), delta(1), epsilon(1). CF(0) has three main subunits: a, b and c.</text>
</comment>
<comment type="subcellular location">
    <subcellularLocation>
        <location evidence="1">Cellular thylakoid membrane</location>
        <topology evidence="1">Peripheral membrane protein</topology>
    </subcellularLocation>
</comment>
<comment type="similarity">
    <text evidence="1">Belongs to the ATPase epsilon chain family.</text>
</comment>
<evidence type="ECO:0000255" key="1">
    <source>
        <dbReference type="HAMAP-Rule" id="MF_00530"/>
    </source>
</evidence>
<evidence type="ECO:0000256" key="2">
    <source>
        <dbReference type="SAM" id="MobiDB-lite"/>
    </source>
</evidence>
<name>ATPE_PROMM</name>
<dbReference type="EMBL" id="BX548175">
    <property type="protein sequence ID" value="CAE21627.1"/>
    <property type="molecule type" value="Genomic_DNA"/>
</dbReference>
<dbReference type="RefSeq" id="WP_011130820.1">
    <property type="nucleotide sequence ID" value="NC_005071.1"/>
</dbReference>
<dbReference type="SMR" id="Q7TUS2"/>
<dbReference type="KEGG" id="pmt:PMT_1452"/>
<dbReference type="eggNOG" id="COG0355">
    <property type="taxonomic scope" value="Bacteria"/>
</dbReference>
<dbReference type="HOGENOM" id="CLU_084338_1_2_3"/>
<dbReference type="OrthoDB" id="9804110at2"/>
<dbReference type="Proteomes" id="UP000001423">
    <property type="component" value="Chromosome"/>
</dbReference>
<dbReference type="GO" id="GO:0031676">
    <property type="term" value="C:plasma membrane-derived thylakoid membrane"/>
    <property type="evidence" value="ECO:0007669"/>
    <property type="project" value="UniProtKB-SubCell"/>
</dbReference>
<dbReference type="GO" id="GO:0045259">
    <property type="term" value="C:proton-transporting ATP synthase complex"/>
    <property type="evidence" value="ECO:0007669"/>
    <property type="project" value="UniProtKB-KW"/>
</dbReference>
<dbReference type="GO" id="GO:0005524">
    <property type="term" value="F:ATP binding"/>
    <property type="evidence" value="ECO:0007669"/>
    <property type="project" value="UniProtKB-UniRule"/>
</dbReference>
<dbReference type="GO" id="GO:0046933">
    <property type="term" value="F:proton-transporting ATP synthase activity, rotational mechanism"/>
    <property type="evidence" value="ECO:0007669"/>
    <property type="project" value="UniProtKB-UniRule"/>
</dbReference>
<dbReference type="CDD" id="cd12152">
    <property type="entry name" value="F1-ATPase_delta"/>
    <property type="match status" value="1"/>
</dbReference>
<dbReference type="Gene3D" id="2.60.15.10">
    <property type="entry name" value="F0F1 ATP synthase delta/epsilon subunit, N-terminal"/>
    <property type="match status" value="1"/>
</dbReference>
<dbReference type="Gene3D" id="1.10.287.540">
    <property type="entry name" value="Helix hairpin bin"/>
    <property type="match status" value="1"/>
</dbReference>
<dbReference type="HAMAP" id="MF_00530">
    <property type="entry name" value="ATP_synth_epsil_bac"/>
    <property type="match status" value="1"/>
</dbReference>
<dbReference type="InterPro" id="IPR001469">
    <property type="entry name" value="ATP_synth_F1_dsu/esu"/>
</dbReference>
<dbReference type="InterPro" id="IPR020546">
    <property type="entry name" value="ATP_synth_F1_dsu/esu_N"/>
</dbReference>
<dbReference type="InterPro" id="IPR020547">
    <property type="entry name" value="ATP_synth_F1_esu_C"/>
</dbReference>
<dbReference type="InterPro" id="IPR036771">
    <property type="entry name" value="ATPsynth_dsu/esu_N"/>
</dbReference>
<dbReference type="NCBIfam" id="TIGR01216">
    <property type="entry name" value="ATP_synt_epsi"/>
    <property type="match status" value="1"/>
</dbReference>
<dbReference type="PANTHER" id="PTHR13822">
    <property type="entry name" value="ATP SYNTHASE DELTA/EPSILON CHAIN"/>
    <property type="match status" value="1"/>
</dbReference>
<dbReference type="PANTHER" id="PTHR13822:SF10">
    <property type="entry name" value="ATP SYNTHASE EPSILON CHAIN, CHLOROPLASTIC"/>
    <property type="match status" value="1"/>
</dbReference>
<dbReference type="Pfam" id="PF00401">
    <property type="entry name" value="ATP-synt_DE"/>
    <property type="match status" value="1"/>
</dbReference>
<dbReference type="Pfam" id="PF02823">
    <property type="entry name" value="ATP-synt_DE_N"/>
    <property type="match status" value="1"/>
</dbReference>
<dbReference type="SUPFAM" id="SSF51344">
    <property type="entry name" value="Epsilon subunit of F1F0-ATP synthase N-terminal domain"/>
    <property type="match status" value="1"/>
</dbReference>